<comment type="function">
    <text evidence="1">Involved in transcription antitermination. Required for transcription of ribosomal RNA (rRNA) genes. Binds specifically to the boxA antiterminator sequence of the ribosomal RNA (rrn) operons.</text>
</comment>
<comment type="similarity">
    <text evidence="1">Belongs to the NusB family.</text>
</comment>
<sequence>MKPAARRRARECAVQALYSWQLSKNDIADVELQFLSEQDVKDVDIAYFRELLSGVAVNAASLDALMAPFLSRQLEELGQVERAVLRIALFELSKRDDVPYKVAINEAIELAKTFGAEDSHKFVNGVLDKVAPTVRKRK</sequence>
<gene>
    <name evidence="1" type="primary">nusB</name>
    <name type="ordered locus">YPN_0907</name>
    <name type="ORF">YP516_0982</name>
</gene>
<name>NUSB_YERPN</name>
<protein>
    <recommendedName>
        <fullName evidence="1">Transcription antitermination protein NusB</fullName>
    </recommendedName>
    <alternativeName>
        <fullName evidence="1">Antitermination factor NusB</fullName>
    </alternativeName>
</protein>
<proteinExistence type="inferred from homology"/>
<organism>
    <name type="scientific">Yersinia pestis bv. Antiqua (strain Nepal516)</name>
    <dbReference type="NCBI Taxonomy" id="377628"/>
    <lineage>
        <taxon>Bacteria</taxon>
        <taxon>Pseudomonadati</taxon>
        <taxon>Pseudomonadota</taxon>
        <taxon>Gammaproteobacteria</taxon>
        <taxon>Enterobacterales</taxon>
        <taxon>Yersiniaceae</taxon>
        <taxon>Yersinia</taxon>
    </lineage>
</organism>
<accession>Q1CL91</accession>
<accession>C4GQI1</accession>
<evidence type="ECO:0000255" key="1">
    <source>
        <dbReference type="HAMAP-Rule" id="MF_00073"/>
    </source>
</evidence>
<dbReference type="EMBL" id="CP000305">
    <property type="protein sequence ID" value="ABG17239.1"/>
    <property type="molecule type" value="Genomic_DNA"/>
</dbReference>
<dbReference type="EMBL" id="ACNQ01000008">
    <property type="protein sequence ID" value="EEO77322.1"/>
    <property type="molecule type" value="Genomic_DNA"/>
</dbReference>
<dbReference type="RefSeq" id="WP_002208665.1">
    <property type="nucleotide sequence ID" value="NZ_ACNQ01000008.1"/>
</dbReference>
<dbReference type="SMR" id="Q1CL91"/>
<dbReference type="GeneID" id="96664444"/>
<dbReference type="KEGG" id="ypn:YPN_0907"/>
<dbReference type="HOGENOM" id="CLU_087843_4_1_6"/>
<dbReference type="Proteomes" id="UP000008936">
    <property type="component" value="Chromosome"/>
</dbReference>
<dbReference type="GO" id="GO:0005829">
    <property type="term" value="C:cytosol"/>
    <property type="evidence" value="ECO:0007669"/>
    <property type="project" value="TreeGrafter"/>
</dbReference>
<dbReference type="GO" id="GO:0003723">
    <property type="term" value="F:RNA binding"/>
    <property type="evidence" value="ECO:0007669"/>
    <property type="project" value="UniProtKB-UniRule"/>
</dbReference>
<dbReference type="GO" id="GO:0006353">
    <property type="term" value="P:DNA-templated transcription termination"/>
    <property type="evidence" value="ECO:0007669"/>
    <property type="project" value="UniProtKB-UniRule"/>
</dbReference>
<dbReference type="GO" id="GO:0031564">
    <property type="term" value="P:transcription antitermination"/>
    <property type="evidence" value="ECO:0007669"/>
    <property type="project" value="UniProtKB-KW"/>
</dbReference>
<dbReference type="CDD" id="cd00619">
    <property type="entry name" value="Terminator_NusB"/>
    <property type="match status" value="1"/>
</dbReference>
<dbReference type="FunFam" id="1.10.940.10:FF:000001">
    <property type="entry name" value="Transcription antitermination factor NusB"/>
    <property type="match status" value="1"/>
</dbReference>
<dbReference type="Gene3D" id="1.10.940.10">
    <property type="entry name" value="NusB-like"/>
    <property type="match status" value="1"/>
</dbReference>
<dbReference type="HAMAP" id="MF_00073">
    <property type="entry name" value="NusB"/>
    <property type="match status" value="1"/>
</dbReference>
<dbReference type="InterPro" id="IPR035926">
    <property type="entry name" value="NusB-like_sf"/>
</dbReference>
<dbReference type="InterPro" id="IPR011605">
    <property type="entry name" value="NusB_fam"/>
</dbReference>
<dbReference type="InterPro" id="IPR006027">
    <property type="entry name" value="NusB_RsmB_TIM44"/>
</dbReference>
<dbReference type="NCBIfam" id="TIGR01951">
    <property type="entry name" value="nusB"/>
    <property type="match status" value="1"/>
</dbReference>
<dbReference type="PANTHER" id="PTHR11078:SF3">
    <property type="entry name" value="ANTITERMINATION NUSB DOMAIN-CONTAINING PROTEIN"/>
    <property type="match status" value="1"/>
</dbReference>
<dbReference type="PANTHER" id="PTHR11078">
    <property type="entry name" value="N UTILIZATION SUBSTANCE PROTEIN B-RELATED"/>
    <property type="match status" value="1"/>
</dbReference>
<dbReference type="Pfam" id="PF01029">
    <property type="entry name" value="NusB"/>
    <property type="match status" value="1"/>
</dbReference>
<dbReference type="SUPFAM" id="SSF48013">
    <property type="entry name" value="NusB-like"/>
    <property type="match status" value="1"/>
</dbReference>
<feature type="chain" id="PRO_0000265630" description="Transcription antitermination protein NusB">
    <location>
        <begin position="1"/>
        <end position="138"/>
    </location>
</feature>
<reference key="1">
    <citation type="journal article" date="2006" name="J. Bacteriol.">
        <title>Complete genome sequence of Yersinia pestis strains Antiqua and Nepal516: evidence of gene reduction in an emerging pathogen.</title>
        <authorList>
            <person name="Chain P.S.G."/>
            <person name="Hu P."/>
            <person name="Malfatti S.A."/>
            <person name="Radnedge L."/>
            <person name="Larimer F."/>
            <person name="Vergez L.M."/>
            <person name="Worsham P."/>
            <person name="Chu M.C."/>
            <person name="Andersen G.L."/>
        </authorList>
    </citation>
    <scope>NUCLEOTIDE SEQUENCE [LARGE SCALE GENOMIC DNA]</scope>
    <source>
        <strain>Nepal516</strain>
    </source>
</reference>
<reference key="2">
    <citation type="submission" date="2009-04" db="EMBL/GenBank/DDBJ databases">
        <title>Yersinia pestis Nepal516A whole genome shotgun sequencing project.</title>
        <authorList>
            <person name="Plunkett G. III"/>
            <person name="Anderson B.D."/>
            <person name="Baumler D.J."/>
            <person name="Burland V."/>
            <person name="Cabot E.L."/>
            <person name="Glasner J.D."/>
            <person name="Mau B."/>
            <person name="Neeno-Eckwall E."/>
            <person name="Perna N.T."/>
            <person name="Munk A.C."/>
            <person name="Tapia R."/>
            <person name="Green L.D."/>
            <person name="Rogers Y.C."/>
            <person name="Detter J.C."/>
            <person name="Bruce D.C."/>
            <person name="Brettin T.S."/>
        </authorList>
    </citation>
    <scope>NUCLEOTIDE SEQUENCE [LARGE SCALE GENOMIC DNA]</scope>
    <source>
        <strain>Nepal516</strain>
    </source>
</reference>
<keyword id="KW-0694">RNA-binding</keyword>
<keyword id="KW-0804">Transcription</keyword>
<keyword id="KW-0889">Transcription antitermination</keyword>
<keyword id="KW-0805">Transcription regulation</keyword>